<protein>
    <recommendedName>
        <fullName evidence="1">Small ribosomal subunit protein uS19</fullName>
    </recommendedName>
    <alternativeName>
        <fullName evidence="2">30S ribosomal protein S19</fullName>
    </alternativeName>
</protein>
<reference key="1">
    <citation type="journal article" date="2010" name="Genome Biol.">
        <title>Structure and dynamics of the pan-genome of Streptococcus pneumoniae and closely related species.</title>
        <authorList>
            <person name="Donati C."/>
            <person name="Hiller N.L."/>
            <person name="Tettelin H."/>
            <person name="Muzzi A."/>
            <person name="Croucher N.J."/>
            <person name="Angiuoli S.V."/>
            <person name="Oggioni M."/>
            <person name="Dunning Hotopp J.C."/>
            <person name="Hu F.Z."/>
            <person name="Riley D.R."/>
            <person name="Covacci A."/>
            <person name="Mitchell T.J."/>
            <person name="Bentley S.D."/>
            <person name="Kilian M."/>
            <person name="Ehrlich G.D."/>
            <person name="Rappuoli R."/>
            <person name="Moxon E.R."/>
            <person name="Masignani V."/>
        </authorList>
    </citation>
    <scope>NUCLEOTIDE SEQUENCE [LARGE SCALE GENOMIC DNA]</scope>
    <source>
        <strain>70585</strain>
    </source>
</reference>
<dbReference type="EMBL" id="CP000918">
    <property type="protein sequence ID" value="ACO17366.1"/>
    <property type="molecule type" value="Genomic_DNA"/>
</dbReference>
<dbReference type="RefSeq" id="WP_000533766.1">
    <property type="nucleotide sequence ID" value="NC_012468.1"/>
</dbReference>
<dbReference type="SMR" id="C1CAL6"/>
<dbReference type="GeneID" id="93920908"/>
<dbReference type="KEGG" id="snm:SP70585_0269"/>
<dbReference type="HOGENOM" id="CLU_144911_0_1_9"/>
<dbReference type="Proteomes" id="UP000002211">
    <property type="component" value="Chromosome"/>
</dbReference>
<dbReference type="GO" id="GO:0005737">
    <property type="term" value="C:cytoplasm"/>
    <property type="evidence" value="ECO:0007669"/>
    <property type="project" value="UniProtKB-ARBA"/>
</dbReference>
<dbReference type="GO" id="GO:0015935">
    <property type="term" value="C:small ribosomal subunit"/>
    <property type="evidence" value="ECO:0007669"/>
    <property type="project" value="InterPro"/>
</dbReference>
<dbReference type="GO" id="GO:0019843">
    <property type="term" value="F:rRNA binding"/>
    <property type="evidence" value="ECO:0007669"/>
    <property type="project" value="UniProtKB-UniRule"/>
</dbReference>
<dbReference type="GO" id="GO:0003735">
    <property type="term" value="F:structural constituent of ribosome"/>
    <property type="evidence" value="ECO:0007669"/>
    <property type="project" value="InterPro"/>
</dbReference>
<dbReference type="GO" id="GO:0000028">
    <property type="term" value="P:ribosomal small subunit assembly"/>
    <property type="evidence" value="ECO:0007669"/>
    <property type="project" value="TreeGrafter"/>
</dbReference>
<dbReference type="GO" id="GO:0006412">
    <property type="term" value="P:translation"/>
    <property type="evidence" value="ECO:0007669"/>
    <property type="project" value="UniProtKB-UniRule"/>
</dbReference>
<dbReference type="FunFam" id="3.30.860.10:FF:000001">
    <property type="entry name" value="30S ribosomal protein S19"/>
    <property type="match status" value="1"/>
</dbReference>
<dbReference type="Gene3D" id="3.30.860.10">
    <property type="entry name" value="30s Ribosomal Protein S19, Chain A"/>
    <property type="match status" value="1"/>
</dbReference>
<dbReference type="HAMAP" id="MF_00531">
    <property type="entry name" value="Ribosomal_uS19"/>
    <property type="match status" value="1"/>
</dbReference>
<dbReference type="InterPro" id="IPR002222">
    <property type="entry name" value="Ribosomal_uS19"/>
</dbReference>
<dbReference type="InterPro" id="IPR005732">
    <property type="entry name" value="Ribosomal_uS19_bac-type"/>
</dbReference>
<dbReference type="InterPro" id="IPR020934">
    <property type="entry name" value="Ribosomal_uS19_CS"/>
</dbReference>
<dbReference type="InterPro" id="IPR023575">
    <property type="entry name" value="Ribosomal_uS19_SF"/>
</dbReference>
<dbReference type="NCBIfam" id="TIGR01050">
    <property type="entry name" value="rpsS_bact"/>
    <property type="match status" value="1"/>
</dbReference>
<dbReference type="PANTHER" id="PTHR11880">
    <property type="entry name" value="RIBOSOMAL PROTEIN S19P FAMILY MEMBER"/>
    <property type="match status" value="1"/>
</dbReference>
<dbReference type="PANTHER" id="PTHR11880:SF8">
    <property type="entry name" value="SMALL RIBOSOMAL SUBUNIT PROTEIN US19M"/>
    <property type="match status" value="1"/>
</dbReference>
<dbReference type="Pfam" id="PF00203">
    <property type="entry name" value="Ribosomal_S19"/>
    <property type="match status" value="1"/>
</dbReference>
<dbReference type="PIRSF" id="PIRSF002144">
    <property type="entry name" value="Ribosomal_S19"/>
    <property type="match status" value="1"/>
</dbReference>
<dbReference type="PRINTS" id="PR00975">
    <property type="entry name" value="RIBOSOMALS19"/>
</dbReference>
<dbReference type="SUPFAM" id="SSF54570">
    <property type="entry name" value="Ribosomal protein S19"/>
    <property type="match status" value="1"/>
</dbReference>
<dbReference type="PROSITE" id="PS00323">
    <property type="entry name" value="RIBOSOMAL_S19"/>
    <property type="match status" value="1"/>
</dbReference>
<feature type="chain" id="PRO_1000146414" description="Small ribosomal subunit protein uS19">
    <location>
        <begin position="1"/>
        <end position="93"/>
    </location>
</feature>
<accession>C1CAL6</accession>
<organism>
    <name type="scientific">Streptococcus pneumoniae (strain 70585)</name>
    <dbReference type="NCBI Taxonomy" id="488221"/>
    <lineage>
        <taxon>Bacteria</taxon>
        <taxon>Bacillati</taxon>
        <taxon>Bacillota</taxon>
        <taxon>Bacilli</taxon>
        <taxon>Lactobacillales</taxon>
        <taxon>Streptococcaceae</taxon>
        <taxon>Streptococcus</taxon>
    </lineage>
</organism>
<name>RS19_STRP7</name>
<keyword id="KW-0687">Ribonucleoprotein</keyword>
<keyword id="KW-0689">Ribosomal protein</keyword>
<keyword id="KW-0694">RNA-binding</keyword>
<keyword id="KW-0699">rRNA-binding</keyword>
<evidence type="ECO:0000255" key="1">
    <source>
        <dbReference type="HAMAP-Rule" id="MF_00531"/>
    </source>
</evidence>
<evidence type="ECO:0000305" key="2"/>
<sequence length="93" mass="10750">MGRSLKKGPFVDEHLMKKVEAQANDEKKKVIKTWSRRSTIFPSFIGYTIAVYDGRKHVPVYIQEDMVGHKLGEFAPTRTYKGHAADDKKTRRK</sequence>
<gene>
    <name evidence="1" type="primary">rpsS</name>
    <name type="ordered locus">SP70585_0269</name>
</gene>
<proteinExistence type="inferred from homology"/>
<comment type="function">
    <text evidence="1">Protein S19 forms a complex with S13 that binds strongly to the 16S ribosomal RNA.</text>
</comment>
<comment type="similarity">
    <text evidence="1">Belongs to the universal ribosomal protein uS19 family.</text>
</comment>